<gene>
    <name type="primary">CFHR1</name>
    <name type="synonym">CFHL</name>
    <name type="synonym">CFHL1</name>
    <name type="synonym">CFHL1P</name>
    <name type="synonym">CFHR1P</name>
    <name type="synonym">FHR1</name>
    <name type="synonym">HFL1</name>
    <name type="synonym">HFL2</name>
</gene>
<feature type="signal peptide" evidence="1">
    <location>
        <begin position="1"/>
        <end position="18"/>
    </location>
</feature>
<feature type="chain" id="PRO_0000005896" description="Complement factor H-related protein 1">
    <location>
        <begin position="19"/>
        <end position="330"/>
    </location>
</feature>
<feature type="domain" description="Sushi 1" evidence="2">
    <location>
        <begin position="22"/>
        <end position="84"/>
    </location>
</feature>
<feature type="domain" description="Sushi 2" evidence="2">
    <location>
        <begin position="85"/>
        <end position="142"/>
    </location>
</feature>
<feature type="domain" description="Sushi 3" evidence="2">
    <location>
        <begin position="145"/>
        <end position="203"/>
    </location>
</feature>
<feature type="domain" description="Sushi 4" evidence="2">
    <location>
        <begin position="206"/>
        <end position="264"/>
    </location>
</feature>
<feature type="domain" description="Sushi 5" evidence="2">
    <location>
        <begin position="273"/>
        <end position="329"/>
    </location>
</feature>
<feature type="glycosylation site" description="N-linked (GlcNAc...) asparagine" evidence="4">
    <location>
        <position position="126"/>
    </location>
</feature>
<feature type="glycosylation site" description="N-linked (GlcNAc...) asparagine" evidence="4">
    <location>
        <position position="194"/>
    </location>
</feature>
<feature type="disulfide bond" evidence="2 10">
    <location>
        <begin position="23"/>
        <end position="72"/>
    </location>
</feature>
<feature type="disulfide bond" evidence="2 10">
    <location>
        <begin position="55"/>
        <end position="83"/>
    </location>
</feature>
<feature type="disulfide bond" evidence="2 10">
    <location>
        <begin position="87"/>
        <end position="129"/>
    </location>
</feature>
<feature type="disulfide bond" evidence="2 10">
    <location>
        <begin position="114"/>
        <end position="140"/>
    </location>
</feature>
<feature type="disulfide bond" evidence="2">
    <location>
        <begin position="147"/>
        <end position="190"/>
    </location>
</feature>
<feature type="disulfide bond" evidence="2">
    <location>
        <begin position="176"/>
        <end position="201"/>
    </location>
</feature>
<feature type="disulfide bond" evidence="2">
    <location>
        <begin position="208"/>
        <end position="251"/>
    </location>
</feature>
<feature type="disulfide bond" evidence="2">
    <location>
        <begin position="237"/>
        <end position="262"/>
    </location>
</feature>
<feature type="disulfide bond" evidence="2">
    <location>
        <begin position="266"/>
        <end position="317"/>
    </location>
</feature>
<feature type="disulfide bond" evidence="2">
    <location>
        <begin position="300"/>
        <end position="327"/>
    </location>
</feature>
<feature type="sequence variant" id="VAR_001980" description="In dbSNP:rs425757." evidence="3 5 8">
    <original>H</original>
    <variation>Y</variation>
    <location>
        <position position="157"/>
    </location>
</feature>
<feature type="sequence variant" id="VAR_001981" description="In dbSNP:rs410232." evidence="3 5 8">
    <original>L</original>
    <variation>V</variation>
    <location>
        <position position="159"/>
    </location>
</feature>
<feature type="sequence variant" id="VAR_001982" description="In dbSNP:rs388862." evidence="3 5 8">
    <original>E</original>
    <variation>Q</variation>
    <location>
        <position position="175"/>
    </location>
</feature>
<feature type="sequence variant" id="VAR_048816" description="In dbSNP:rs16840561.">
    <original>A</original>
    <variation>V</variation>
    <location>
        <position position="296"/>
    </location>
</feature>
<feature type="sequence conflict" description="In Ref. 6; CAA39666." evidence="12" ref="6">
    <original>T</original>
    <variation>N</variation>
    <location>
        <position position="71"/>
    </location>
</feature>
<feature type="strand" evidence="13">
    <location>
        <begin position="21"/>
        <end position="24"/>
    </location>
</feature>
<feature type="strand" evidence="13">
    <location>
        <begin position="31"/>
        <end position="33"/>
    </location>
</feature>
<feature type="helix" evidence="13">
    <location>
        <begin position="36"/>
        <end position="38"/>
    </location>
</feature>
<feature type="strand" evidence="13">
    <location>
        <begin position="44"/>
        <end position="46"/>
    </location>
</feature>
<feature type="strand" evidence="13">
    <location>
        <begin position="50"/>
        <end position="55"/>
    </location>
</feature>
<feature type="strand" evidence="13">
    <location>
        <begin position="66"/>
        <end position="73"/>
    </location>
</feature>
<feature type="strand" evidence="13">
    <location>
        <begin position="76"/>
        <end position="79"/>
    </location>
</feature>
<feature type="strand" evidence="13">
    <location>
        <begin position="84"/>
        <end position="87"/>
    </location>
</feature>
<feature type="turn" evidence="13">
    <location>
        <begin position="98"/>
        <end position="101"/>
    </location>
</feature>
<feature type="strand" evidence="13">
    <location>
        <begin position="125"/>
        <end position="130"/>
    </location>
</feature>
<feature type="strand" evidence="13">
    <location>
        <begin position="133"/>
        <end position="136"/>
    </location>
</feature>
<feature type="strand" evidence="14">
    <location>
        <begin position="217"/>
        <end position="221"/>
    </location>
</feature>
<feature type="strand" evidence="14">
    <location>
        <begin position="232"/>
        <end position="237"/>
    </location>
</feature>
<feature type="strand" evidence="14">
    <location>
        <begin position="242"/>
        <end position="245"/>
    </location>
</feature>
<feature type="strand" evidence="14">
    <location>
        <begin position="247"/>
        <end position="252"/>
    </location>
</feature>
<feature type="strand" evidence="14">
    <location>
        <begin position="261"/>
        <end position="263"/>
    </location>
</feature>
<feature type="helix" evidence="14">
    <location>
        <begin position="270"/>
        <end position="275"/>
    </location>
</feature>
<feature type="strand" evidence="14">
    <location>
        <begin position="278"/>
        <end position="280"/>
    </location>
</feature>
<feature type="helix" evidence="14">
    <location>
        <begin position="282"/>
        <end position="284"/>
    </location>
</feature>
<feature type="strand" evidence="14">
    <location>
        <begin position="295"/>
        <end position="300"/>
    </location>
</feature>
<feature type="strand" evidence="14">
    <location>
        <begin position="313"/>
        <end position="318"/>
    </location>
</feature>
<sequence length="330" mass="37651">MWLLVSVILISRISSVGGEATFCDFPKINHGILYDEEKYKPFSQVPTGEVFYYSCEYNFVSPSKSFWTRITCTEEGWSPTPKCLRLCFFPFVENGHSESSGQTHLEGDTVQIICNTGYRLQNNENNISCVERGWSTPPKCRSTDTSCVNPPTVQNAHILSRQMSKYPSGERVRYECRSPYEMFGDEEVMCLNGNWTEPPQCKDSTGKCGPPPPIDNGDITSFPLSVYAPASSVEYQCQNLYQLEGNKRITCRNGQWSEPPKCLHPCVISREIMENYNIALRWTAKQKLYLRTGESAEFVCKRGYRLSSRSHTLRTTCWDGKLEYPTCAKR</sequence>
<name>FHR1_HUMAN</name>
<reference key="1">
    <citation type="journal article" date="1991" name="J. Immunol.">
        <title>Cloning of the 1.4-kb mRNA species of human complement factor H reveals a novel member of the short consensus repeat family related to the carboxy terminal of the classical 150-kDa molecule.</title>
        <authorList>
            <person name="Estaller C."/>
            <person name="Koistinen V."/>
            <person name="Schwaeble W."/>
            <person name="Dierich M.P."/>
            <person name="Weiss E.H."/>
        </authorList>
    </citation>
    <scope>NUCLEOTIDE SEQUENCE [MRNA]</scope>
    <scope>VARIANTS TYR-157; VAL-159 AND GLN-175</scope>
    <source>
        <tissue>Liver</tissue>
    </source>
</reference>
<reference key="2">
    <citation type="journal article" date="2000" name="Mol. Immunol.">
        <title>Complement factor H: sequence analysis of 221 kb of human genomic DNA containing the entire fH, fHR-1 and fHR-3 genes.</title>
        <authorList>
            <person name="Male D.A."/>
            <person name="Ormsby R.J."/>
            <person name="Ranganathan S."/>
            <person name="Giannakis E."/>
            <person name="Gordon D.L."/>
        </authorList>
    </citation>
    <scope>NUCLEOTIDE SEQUENCE [GENOMIC DNA]</scope>
</reference>
<reference key="3">
    <citation type="journal article" date="2004" name="Nat. Genet.">
        <title>Complete sequencing and characterization of 21,243 full-length human cDNAs.</title>
        <authorList>
            <person name="Ota T."/>
            <person name="Suzuki Y."/>
            <person name="Nishikawa T."/>
            <person name="Otsuki T."/>
            <person name="Sugiyama T."/>
            <person name="Irie R."/>
            <person name="Wakamatsu A."/>
            <person name="Hayashi K."/>
            <person name="Sato H."/>
            <person name="Nagai K."/>
            <person name="Kimura K."/>
            <person name="Makita H."/>
            <person name="Sekine M."/>
            <person name="Obayashi M."/>
            <person name="Nishi T."/>
            <person name="Shibahara T."/>
            <person name="Tanaka T."/>
            <person name="Ishii S."/>
            <person name="Yamamoto J."/>
            <person name="Saito K."/>
            <person name="Kawai Y."/>
            <person name="Isono Y."/>
            <person name="Nakamura Y."/>
            <person name="Nagahari K."/>
            <person name="Murakami K."/>
            <person name="Yasuda T."/>
            <person name="Iwayanagi T."/>
            <person name="Wagatsuma M."/>
            <person name="Shiratori A."/>
            <person name="Sudo H."/>
            <person name="Hosoiri T."/>
            <person name="Kaku Y."/>
            <person name="Kodaira H."/>
            <person name="Kondo H."/>
            <person name="Sugawara M."/>
            <person name="Takahashi M."/>
            <person name="Kanda K."/>
            <person name="Yokoi T."/>
            <person name="Furuya T."/>
            <person name="Kikkawa E."/>
            <person name="Omura Y."/>
            <person name="Abe K."/>
            <person name="Kamihara K."/>
            <person name="Katsuta N."/>
            <person name="Sato K."/>
            <person name="Tanikawa M."/>
            <person name="Yamazaki M."/>
            <person name="Ninomiya K."/>
            <person name="Ishibashi T."/>
            <person name="Yamashita H."/>
            <person name="Murakawa K."/>
            <person name="Fujimori K."/>
            <person name="Tanai H."/>
            <person name="Kimata M."/>
            <person name="Watanabe M."/>
            <person name="Hiraoka S."/>
            <person name="Chiba Y."/>
            <person name="Ishida S."/>
            <person name="Ono Y."/>
            <person name="Takiguchi S."/>
            <person name="Watanabe S."/>
            <person name="Yosida M."/>
            <person name="Hotuta T."/>
            <person name="Kusano J."/>
            <person name="Kanehori K."/>
            <person name="Takahashi-Fujii A."/>
            <person name="Hara H."/>
            <person name="Tanase T.-O."/>
            <person name="Nomura Y."/>
            <person name="Togiya S."/>
            <person name="Komai F."/>
            <person name="Hara R."/>
            <person name="Takeuchi K."/>
            <person name="Arita M."/>
            <person name="Imose N."/>
            <person name="Musashino K."/>
            <person name="Yuuki H."/>
            <person name="Oshima A."/>
            <person name="Sasaki N."/>
            <person name="Aotsuka S."/>
            <person name="Yoshikawa Y."/>
            <person name="Matsunawa H."/>
            <person name="Ichihara T."/>
            <person name="Shiohata N."/>
            <person name="Sano S."/>
            <person name="Moriya S."/>
            <person name="Momiyama H."/>
            <person name="Satoh N."/>
            <person name="Takami S."/>
            <person name="Terashima Y."/>
            <person name="Suzuki O."/>
            <person name="Nakagawa S."/>
            <person name="Senoh A."/>
            <person name="Mizoguchi H."/>
            <person name="Goto Y."/>
            <person name="Shimizu F."/>
            <person name="Wakebe H."/>
            <person name="Hishigaki H."/>
            <person name="Watanabe T."/>
            <person name="Sugiyama A."/>
            <person name="Takemoto M."/>
            <person name="Kawakami B."/>
            <person name="Yamazaki M."/>
            <person name="Watanabe K."/>
            <person name="Kumagai A."/>
            <person name="Itakura S."/>
            <person name="Fukuzumi Y."/>
            <person name="Fujimori Y."/>
            <person name="Komiyama M."/>
            <person name="Tashiro H."/>
            <person name="Tanigami A."/>
            <person name="Fujiwara T."/>
            <person name="Ono T."/>
            <person name="Yamada K."/>
            <person name="Fujii Y."/>
            <person name="Ozaki K."/>
            <person name="Hirao M."/>
            <person name="Ohmori Y."/>
            <person name="Kawabata A."/>
            <person name="Hikiji T."/>
            <person name="Kobatake N."/>
            <person name="Inagaki H."/>
            <person name="Ikema Y."/>
            <person name="Okamoto S."/>
            <person name="Okitani R."/>
            <person name="Kawakami T."/>
            <person name="Noguchi S."/>
            <person name="Itoh T."/>
            <person name="Shigeta K."/>
            <person name="Senba T."/>
            <person name="Matsumura K."/>
            <person name="Nakajima Y."/>
            <person name="Mizuno T."/>
            <person name="Morinaga M."/>
            <person name="Sasaki M."/>
            <person name="Togashi T."/>
            <person name="Oyama M."/>
            <person name="Hata H."/>
            <person name="Watanabe M."/>
            <person name="Komatsu T."/>
            <person name="Mizushima-Sugano J."/>
            <person name="Satoh T."/>
            <person name="Shirai Y."/>
            <person name="Takahashi Y."/>
            <person name="Nakagawa K."/>
            <person name="Okumura K."/>
            <person name="Nagase T."/>
            <person name="Nomura N."/>
            <person name="Kikuchi H."/>
            <person name="Masuho Y."/>
            <person name="Yamashita R."/>
            <person name="Nakai K."/>
            <person name="Yada T."/>
            <person name="Nakamura Y."/>
            <person name="Ohara O."/>
            <person name="Isogai T."/>
            <person name="Sugano S."/>
        </authorList>
    </citation>
    <scope>NUCLEOTIDE SEQUENCE [LARGE SCALE MRNA]</scope>
    <scope>VARIANTS TYR-157; VAL-159 AND GLN-175</scope>
    <source>
        <tissue>Liver</tissue>
    </source>
</reference>
<reference key="4">
    <citation type="journal article" date="2006" name="Nature">
        <title>The DNA sequence and biological annotation of human chromosome 1.</title>
        <authorList>
            <person name="Gregory S.G."/>
            <person name="Barlow K.F."/>
            <person name="McLay K.E."/>
            <person name="Kaul R."/>
            <person name="Swarbreck D."/>
            <person name="Dunham A."/>
            <person name="Scott C.E."/>
            <person name="Howe K.L."/>
            <person name="Woodfine K."/>
            <person name="Spencer C.C.A."/>
            <person name="Jones M.C."/>
            <person name="Gillson C."/>
            <person name="Searle S."/>
            <person name="Zhou Y."/>
            <person name="Kokocinski F."/>
            <person name="McDonald L."/>
            <person name="Evans R."/>
            <person name="Phillips K."/>
            <person name="Atkinson A."/>
            <person name="Cooper R."/>
            <person name="Jones C."/>
            <person name="Hall R.E."/>
            <person name="Andrews T.D."/>
            <person name="Lloyd C."/>
            <person name="Ainscough R."/>
            <person name="Almeida J.P."/>
            <person name="Ambrose K.D."/>
            <person name="Anderson F."/>
            <person name="Andrew R.W."/>
            <person name="Ashwell R.I.S."/>
            <person name="Aubin K."/>
            <person name="Babbage A.K."/>
            <person name="Bagguley C.L."/>
            <person name="Bailey J."/>
            <person name="Beasley H."/>
            <person name="Bethel G."/>
            <person name="Bird C.P."/>
            <person name="Bray-Allen S."/>
            <person name="Brown J.Y."/>
            <person name="Brown A.J."/>
            <person name="Buckley D."/>
            <person name="Burton J."/>
            <person name="Bye J."/>
            <person name="Carder C."/>
            <person name="Chapman J.C."/>
            <person name="Clark S.Y."/>
            <person name="Clarke G."/>
            <person name="Clee C."/>
            <person name="Cobley V."/>
            <person name="Collier R.E."/>
            <person name="Corby N."/>
            <person name="Coville G.J."/>
            <person name="Davies J."/>
            <person name="Deadman R."/>
            <person name="Dunn M."/>
            <person name="Earthrowl M."/>
            <person name="Ellington A.G."/>
            <person name="Errington H."/>
            <person name="Frankish A."/>
            <person name="Frankland J."/>
            <person name="French L."/>
            <person name="Garner P."/>
            <person name="Garnett J."/>
            <person name="Gay L."/>
            <person name="Ghori M.R.J."/>
            <person name="Gibson R."/>
            <person name="Gilby L.M."/>
            <person name="Gillett W."/>
            <person name="Glithero R.J."/>
            <person name="Grafham D.V."/>
            <person name="Griffiths C."/>
            <person name="Griffiths-Jones S."/>
            <person name="Grocock R."/>
            <person name="Hammond S."/>
            <person name="Harrison E.S.I."/>
            <person name="Hart E."/>
            <person name="Haugen E."/>
            <person name="Heath P.D."/>
            <person name="Holmes S."/>
            <person name="Holt K."/>
            <person name="Howden P.J."/>
            <person name="Hunt A.R."/>
            <person name="Hunt S.E."/>
            <person name="Hunter G."/>
            <person name="Isherwood J."/>
            <person name="James R."/>
            <person name="Johnson C."/>
            <person name="Johnson D."/>
            <person name="Joy A."/>
            <person name="Kay M."/>
            <person name="Kershaw J.K."/>
            <person name="Kibukawa M."/>
            <person name="Kimberley A.M."/>
            <person name="King A."/>
            <person name="Knights A.J."/>
            <person name="Lad H."/>
            <person name="Laird G."/>
            <person name="Lawlor S."/>
            <person name="Leongamornlert D.A."/>
            <person name="Lloyd D.M."/>
            <person name="Loveland J."/>
            <person name="Lovell J."/>
            <person name="Lush M.J."/>
            <person name="Lyne R."/>
            <person name="Martin S."/>
            <person name="Mashreghi-Mohammadi M."/>
            <person name="Matthews L."/>
            <person name="Matthews N.S.W."/>
            <person name="McLaren S."/>
            <person name="Milne S."/>
            <person name="Mistry S."/>
            <person name="Moore M.J.F."/>
            <person name="Nickerson T."/>
            <person name="O'Dell C.N."/>
            <person name="Oliver K."/>
            <person name="Palmeiri A."/>
            <person name="Palmer S.A."/>
            <person name="Parker A."/>
            <person name="Patel D."/>
            <person name="Pearce A.V."/>
            <person name="Peck A.I."/>
            <person name="Pelan S."/>
            <person name="Phelps K."/>
            <person name="Phillimore B.J."/>
            <person name="Plumb R."/>
            <person name="Rajan J."/>
            <person name="Raymond C."/>
            <person name="Rouse G."/>
            <person name="Saenphimmachak C."/>
            <person name="Sehra H.K."/>
            <person name="Sheridan E."/>
            <person name="Shownkeen R."/>
            <person name="Sims S."/>
            <person name="Skuce C.D."/>
            <person name="Smith M."/>
            <person name="Steward C."/>
            <person name="Subramanian S."/>
            <person name="Sycamore N."/>
            <person name="Tracey A."/>
            <person name="Tromans A."/>
            <person name="Van Helmond Z."/>
            <person name="Wall M."/>
            <person name="Wallis J.M."/>
            <person name="White S."/>
            <person name="Whitehead S.L."/>
            <person name="Wilkinson J.E."/>
            <person name="Willey D.L."/>
            <person name="Williams H."/>
            <person name="Wilming L."/>
            <person name="Wray P.W."/>
            <person name="Wu Z."/>
            <person name="Coulson A."/>
            <person name="Vaudin M."/>
            <person name="Sulston J.E."/>
            <person name="Durbin R.M."/>
            <person name="Hubbard T."/>
            <person name="Wooster R."/>
            <person name="Dunham I."/>
            <person name="Carter N.P."/>
            <person name="McVean G."/>
            <person name="Ross M.T."/>
            <person name="Harrow J."/>
            <person name="Olson M.V."/>
            <person name="Beck S."/>
            <person name="Rogers J."/>
            <person name="Bentley D.R."/>
        </authorList>
    </citation>
    <scope>NUCLEOTIDE SEQUENCE [LARGE SCALE GENOMIC DNA]</scope>
</reference>
<reference key="5">
    <citation type="journal article" date="2004" name="Genome Res.">
        <title>The status, quality, and expansion of the NIH full-length cDNA project: the Mammalian Gene Collection (MGC).</title>
        <authorList>
            <consortium name="The MGC Project Team"/>
        </authorList>
    </citation>
    <scope>NUCLEOTIDE SEQUENCE [LARGE SCALE MRNA]</scope>
    <source>
        <tissue>Liver</tissue>
        <tissue>Skeletal muscle</tissue>
    </source>
</reference>
<reference key="6">
    <citation type="journal article" date="1991" name="J. Biol. Chem.">
        <title>Molecular cloning of a human serum protein structurally related to complement factor H.</title>
        <authorList>
            <person name="Skerka C."/>
            <person name="Horstmann R.D."/>
            <person name="Zipfel P.F."/>
        </authorList>
    </citation>
    <scope>NUCLEOTIDE SEQUENCE [MRNA] OF 4-330</scope>
    <scope>VARIANTS TYR-157; VAL-159 AND GLN-175</scope>
</reference>
<reference key="7">
    <citation type="journal article" date="1991" name="J. Immunol.">
        <title>Two major serum components antigenically related to complement factor H are different glycosylation forms of a single protein with no factor H-like complement regulatory functions.</title>
        <authorList>
            <person name="Timmann C."/>
            <person name="Leippe M."/>
            <person name="Horstmann R.D."/>
        </authorList>
    </citation>
    <scope>STRUCTURE OF CARBOHYDRATES</scope>
</reference>
<reference key="8">
    <citation type="journal article" date="1994" name="Immunol. Today">
        <title>Complement factor H and related proteins: an expanding family of complement-regulatory proteins?</title>
        <authorList>
            <person name="Zipfel P.F."/>
            <person name="Skerka C."/>
        </authorList>
    </citation>
    <scope>REVIEW</scope>
</reference>
<reference key="9">
    <citation type="journal article" date="2005" name="J. Proteome Res.">
        <title>Human plasma N-glycoproteome analysis by immunoaffinity subtraction, hydrazide chemistry, and mass spectrometry.</title>
        <authorList>
            <person name="Liu T."/>
            <person name="Qian W.-J."/>
            <person name="Gritsenko M.A."/>
            <person name="Camp D.G. II"/>
            <person name="Monroe M.E."/>
            <person name="Moore R.J."/>
            <person name="Smith R.D."/>
        </authorList>
    </citation>
    <scope>GLYCOSYLATION [LARGE SCALE ANALYSIS] AT ASN-126 AND ASN-194</scope>
    <source>
        <tissue>Plasma</tissue>
    </source>
</reference>
<reference key="10">
    <citation type="journal article" date="2007" name="PLoS Genet.">
        <title>Deletion of complement factor H-related genes CFHR1 and CFHR3 is associated with atypical hemolytic uremic syndrome.</title>
        <authorList>
            <person name="Zipfel P.F."/>
            <person name="Edey M."/>
            <person name="Heinen S."/>
            <person name="Jozsi M."/>
            <person name="Richter H."/>
            <person name="Misselwitz J."/>
            <person name="Hoppe B."/>
            <person name="Routledge D."/>
            <person name="Strain L."/>
            <person name="Hughes A.E."/>
            <person name="Goodship J.A."/>
            <person name="Licht C."/>
            <person name="Goodship T.H."/>
            <person name="Skerka C."/>
        </authorList>
    </citation>
    <scope>INVOLVEMENT IN AHUS1</scope>
</reference>
<reference key="11">
    <citation type="journal article" date="2008" name="Blood">
        <title>Factor H autoantibodies in atypical hemolytic uremic syndrome correlate with CFHR1/CFHR3 deficiency.</title>
        <authorList>
            <person name="Jozsi M."/>
            <person name="Licht C."/>
            <person name="Strobel S."/>
            <person name="Zipfel S.L."/>
            <person name="Richter H."/>
            <person name="Heinen S."/>
            <person name="Zipfel P.F."/>
            <person name="Skerka C."/>
        </authorList>
    </citation>
    <scope>INVOLVEMENT IN AHUS1</scope>
</reference>
<reference key="12">
    <citation type="journal article" date="2013" name="J. Infect. Dis.">
        <title>Glycerol-3-phosphate dehydrogenase 2 is a novel factor H-, factor H-like protein 1-, and plasminogen-binding surface protein of Candida albicans.</title>
        <authorList>
            <person name="Luo S."/>
            <person name="Hoffmann R."/>
            <person name="Skerka C."/>
            <person name="Zipfel P.F."/>
        </authorList>
    </citation>
    <scope>INTERACTION WITH C.ALBICANS GPD2 (MICROBIAL INFECTION)</scope>
</reference>
<reference key="13">
    <citation type="journal article" date="2013" name="Proc. Natl. Acad. Sci. U.S.A.">
        <title>Dimerization of complement factor H-related proteins modulates complement activation in vivo.</title>
        <authorList>
            <person name="Goicoechea de Jorge E."/>
            <person name="Caesar J.J."/>
            <person name="Malik T.H."/>
            <person name="Patel M."/>
            <person name="Colledge M."/>
            <person name="Johnson S."/>
            <person name="Hakobyan S."/>
            <person name="Morgan B.P."/>
            <person name="Harris C.L."/>
            <person name="Pickering M.C."/>
            <person name="Lea S.M."/>
        </authorList>
    </citation>
    <scope>X-RAY CRYSTALLOGRAPHY (1.99 ANGSTROMS) OF 19-143</scope>
    <scope>FUNCTION</scope>
    <scope>SUBUNIT</scope>
    <scope>DISULFIDE BONDS</scope>
</reference>
<dbReference type="EMBL" id="M65292">
    <property type="protein sequence ID" value="AAA35946.1"/>
    <property type="molecule type" value="mRNA"/>
</dbReference>
<dbReference type="EMBL" id="M65293">
    <property type="protein sequence ID" value="AAA35947.1"/>
    <property type="molecule type" value="mRNA"/>
</dbReference>
<dbReference type="EMBL" id="AK290830">
    <property type="protein sequence ID" value="BAF83519.1"/>
    <property type="molecule type" value="mRNA"/>
</dbReference>
<dbReference type="EMBL" id="AL049741">
    <property type="status" value="NOT_ANNOTATED_CDS"/>
    <property type="molecule type" value="Genomic_DNA"/>
</dbReference>
<dbReference type="EMBL" id="BC016755">
    <property type="protein sequence ID" value="AAH16755.1"/>
    <property type="molecule type" value="mRNA"/>
</dbReference>
<dbReference type="EMBL" id="BC107771">
    <property type="protein sequence ID" value="AAI07772.1"/>
    <property type="molecule type" value="mRNA"/>
</dbReference>
<dbReference type="EMBL" id="X56209">
    <property type="protein sequence ID" value="CAA39666.1"/>
    <property type="molecule type" value="mRNA"/>
</dbReference>
<dbReference type="CCDS" id="CCDS1386.1"/>
<dbReference type="PIR" id="I56100">
    <property type="entry name" value="I56100"/>
</dbReference>
<dbReference type="RefSeq" id="NP_002104.2">
    <property type="nucleotide sequence ID" value="NM_002113.3"/>
</dbReference>
<dbReference type="PDB" id="3ZD2">
    <property type="method" value="X-ray"/>
    <property type="resolution" value="1.99 A"/>
    <property type="chains" value="A/B=19-143"/>
</dbReference>
<dbReference type="PDB" id="4MUC">
    <property type="method" value="X-ray"/>
    <property type="resolution" value="2.90 A"/>
    <property type="chains" value="A/B=205-329"/>
</dbReference>
<dbReference type="PDBsum" id="3ZD2"/>
<dbReference type="PDBsum" id="4MUC"/>
<dbReference type="SMR" id="Q03591"/>
<dbReference type="BioGRID" id="109326">
    <property type="interactions" value="5"/>
</dbReference>
<dbReference type="FunCoup" id="Q03591">
    <property type="interactions" value="89"/>
</dbReference>
<dbReference type="IntAct" id="Q03591">
    <property type="interactions" value="15"/>
</dbReference>
<dbReference type="MINT" id="Q03591"/>
<dbReference type="STRING" id="9606.ENSP00000314299"/>
<dbReference type="GlyConnect" id="1152">
    <property type="glycosylation" value="11 N-Linked glycans (2 sites)"/>
</dbReference>
<dbReference type="GlyCosmos" id="Q03591">
    <property type="glycosylation" value="2 sites, 10 glycans"/>
</dbReference>
<dbReference type="GlyGen" id="Q03591">
    <property type="glycosylation" value="2 sites, 36 N-linked glycans (2 sites)"/>
</dbReference>
<dbReference type="iPTMnet" id="Q03591"/>
<dbReference type="PhosphoSitePlus" id="Q03591"/>
<dbReference type="BioMuta" id="CFHR1"/>
<dbReference type="DMDM" id="218512041"/>
<dbReference type="jPOST" id="Q03591"/>
<dbReference type="MassIVE" id="Q03591"/>
<dbReference type="PaxDb" id="9606-ENSP00000314299"/>
<dbReference type="PeptideAtlas" id="Q03591"/>
<dbReference type="ProteomicsDB" id="58217"/>
<dbReference type="Pumba" id="Q03591"/>
<dbReference type="Antibodypedia" id="34881">
    <property type="antibodies" value="255 antibodies from 29 providers"/>
</dbReference>
<dbReference type="DNASU" id="3078"/>
<dbReference type="Ensembl" id="ENST00000320493.10">
    <property type="protein sequence ID" value="ENSP00000314299.5"/>
    <property type="gene ID" value="ENSG00000244414.8"/>
</dbReference>
<dbReference type="GeneID" id="3078"/>
<dbReference type="KEGG" id="hsa:3078"/>
<dbReference type="MANE-Select" id="ENST00000320493.10">
    <property type="protein sequence ID" value="ENSP00000314299.5"/>
    <property type="RefSeq nucleotide sequence ID" value="NM_002113.3"/>
    <property type="RefSeq protein sequence ID" value="NP_002104.2"/>
</dbReference>
<dbReference type="UCSC" id="uc001gtn.4">
    <property type="organism name" value="human"/>
</dbReference>
<dbReference type="AGR" id="HGNC:4888"/>
<dbReference type="CTD" id="3078"/>
<dbReference type="DisGeNET" id="3078"/>
<dbReference type="GeneCards" id="CFHR1"/>
<dbReference type="GeneReviews" id="CFHR1"/>
<dbReference type="HGNC" id="HGNC:4888">
    <property type="gene designation" value="CFHR1"/>
</dbReference>
<dbReference type="HPA" id="ENSG00000244414">
    <property type="expression patterns" value="Tissue enriched (liver)"/>
</dbReference>
<dbReference type="MalaCards" id="CFHR1"/>
<dbReference type="MIM" id="134371">
    <property type="type" value="gene"/>
</dbReference>
<dbReference type="MIM" id="235400">
    <property type="type" value="phenotype"/>
</dbReference>
<dbReference type="neXtProt" id="NX_Q03591"/>
<dbReference type="OpenTargets" id="ENSG00000244414"/>
<dbReference type="Orphanet" id="329931">
    <property type="disease" value="C3 glomerulonephritis"/>
</dbReference>
<dbReference type="Orphanet" id="93571">
    <property type="disease" value="Dense deposit disease"/>
</dbReference>
<dbReference type="PharmGKB" id="PA29265"/>
<dbReference type="VEuPathDB" id="HostDB:ENSG00000244414"/>
<dbReference type="eggNOG" id="ENOG502RTVV">
    <property type="taxonomic scope" value="Eukaryota"/>
</dbReference>
<dbReference type="GeneTree" id="ENSGT00940000163634"/>
<dbReference type="InParanoid" id="Q03591"/>
<dbReference type="OMA" id="ERIWFSC"/>
<dbReference type="PAN-GO" id="Q03591">
    <property type="GO annotations" value="3 GO annotations based on evolutionary models"/>
</dbReference>
<dbReference type="PhylomeDB" id="Q03591"/>
<dbReference type="TreeFam" id="TF326157"/>
<dbReference type="PathwayCommons" id="Q03591"/>
<dbReference type="Reactome" id="R-HSA-977606">
    <property type="pathway name" value="Regulation of Complement cascade"/>
</dbReference>
<dbReference type="SignaLink" id="Q03591"/>
<dbReference type="SIGNOR" id="Q03591"/>
<dbReference type="BioGRID-ORCS" id="3078">
    <property type="hits" value="7 hits in 1038 CRISPR screens"/>
</dbReference>
<dbReference type="ChiTaRS" id="CFHR1">
    <property type="organism name" value="human"/>
</dbReference>
<dbReference type="EvolutionaryTrace" id="Q03591"/>
<dbReference type="GeneWiki" id="CFHR1"/>
<dbReference type="GenomeRNAi" id="3078"/>
<dbReference type="Pharos" id="Q03591">
    <property type="development level" value="Tbio"/>
</dbReference>
<dbReference type="PRO" id="PR:Q03591"/>
<dbReference type="Proteomes" id="UP000005640">
    <property type="component" value="Chromosome 1"/>
</dbReference>
<dbReference type="RNAct" id="Q03591">
    <property type="molecule type" value="protein"/>
</dbReference>
<dbReference type="Bgee" id="ENSG00000244414">
    <property type="expression patterns" value="Expressed in right lobe of liver and 88 other cell types or tissues"/>
</dbReference>
<dbReference type="ExpressionAtlas" id="Q03591">
    <property type="expression patterns" value="baseline and differential"/>
</dbReference>
<dbReference type="GO" id="GO:0072562">
    <property type="term" value="C:blood microparticle"/>
    <property type="evidence" value="ECO:0007005"/>
    <property type="project" value="UniProtKB"/>
</dbReference>
<dbReference type="GO" id="GO:0005576">
    <property type="term" value="C:extracellular region"/>
    <property type="evidence" value="ECO:0000304"/>
    <property type="project" value="Reactome"/>
</dbReference>
<dbReference type="GO" id="GO:0005615">
    <property type="term" value="C:extracellular space"/>
    <property type="evidence" value="ECO:0000318"/>
    <property type="project" value="GO_Central"/>
</dbReference>
<dbReference type="GO" id="GO:0032991">
    <property type="term" value="C:protein-containing complex"/>
    <property type="evidence" value="ECO:0000314"/>
    <property type="project" value="UniProtKB"/>
</dbReference>
<dbReference type="GO" id="GO:0001851">
    <property type="term" value="F:complement component C3b binding"/>
    <property type="evidence" value="ECO:0000318"/>
    <property type="project" value="GO_Central"/>
</dbReference>
<dbReference type="GO" id="GO:0042802">
    <property type="term" value="F:identical protein binding"/>
    <property type="evidence" value="ECO:0000353"/>
    <property type="project" value="UniProtKB"/>
</dbReference>
<dbReference type="GO" id="GO:0006956">
    <property type="term" value="P:complement activation"/>
    <property type="evidence" value="ECO:0000318"/>
    <property type="project" value="GO_Central"/>
</dbReference>
<dbReference type="GO" id="GO:0051838">
    <property type="term" value="P:cytolysis by host of symbiont cells"/>
    <property type="evidence" value="ECO:0000315"/>
    <property type="project" value="UniProtKB"/>
</dbReference>
<dbReference type="GO" id="GO:0032091">
    <property type="term" value="P:negative regulation of protein binding"/>
    <property type="evidence" value="ECO:0000315"/>
    <property type="project" value="UniProtKB"/>
</dbReference>
<dbReference type="CDD" id="cd00033">
    <property type="entry name" value="CCP"/>
    <property type="match status" value="3"/>
</dbReference>
<dbReference type="FunFam" id="2.10.70.10:FF:000131">
    <property type="entry name" value="Complement factor H-related protein 1"/>
    <property type="match status" value="1"/>
</dbReference>
<dbReference type="FunFam" id="2.10.70.10:FF:000026">
    <property type="entry name" value="Complement inhibitory factor H"/>
    <property type="match status" value="2"/>
</dbReference>
<dbReference type="FunFam" id="2.10.70.10:FF:000054">
    <property type="entry name" value="Complement inhibitory factor H"/>
    <property type="match status" value="1"/>
</dbReference>
<dbReference type="FunFam" id="2.10.70.10:FF:000060">
    <property type="entry name" value="Complement inhibitory factor H"/>
    <property type="match status" value="1"/>
</dbReference>
<dbReference type="Gene3D" id="2.10.70.10">
    <property type="entry name" value="Complement Module, domain 1"/>
    <property type="match status" value="5"/>
</dbReference>
<dbReference type="InterPro" id="IPR051503">
    <property type="entry name" value="ComplSys_Reg/VirEntry_Med"/>
</dbReference>
<dbReference type="InterPro" id="IPR035976">
    <property type="entry name" value="Sushi/SCR/CCP_sf"/>
</dbReference>
<dbReference type="InterPro" id="IPR000436">
    <property type="entry name" value="Sushi_SCR_CCP_dom"/>
</dbReference>
<dbReference type="PANTHER" id="PTHR45785">
    <property type="entry name" value="COMPLEMENT FACTOR H-RELATED"/>
    <property type="match status" value="1"/>
</dbReference>
<dbReference type="PANTHER" id="PTHR45785:SF12">
    <property type="entry name" value="COMPLEMENT FACTOR H-RELATED PROTEIN 1-RELATED"/>
    <property type="match status" value="1"/>
</dbReference>
<dbReference type="Pfam" id="PF00084">
    <property type="entry name" value="Sushi"/>
    <property type="match status" value="5"/>
</dbReference>
<dbReference type="SMART" id="SM00032">
    <property type="entry name" value="CCP"/>
    <property type="match status" value="5"/>
</dbReference>
<dbReference type="SUPFAM" id="SSF57535">
    <property type="entry name" value="Complement control module/SCR domain"/>
    <property type="match status" value="5"/>
</dbReference>
<dbReference type="PROSITE" id="PS50923">
    <property type="entry name" value="SUSHI"/>
    <property type="match status" value="4"/>
</dbReference>
<proteinExistence type="evidence at protein level"/>
<accession>Q03591</accession>
<accession>A8K465</accession>
<accession>Q3B774</accession>
<accession>Q9UJ17</accession>
<evidence type="ECO:0000255" key="1"/>
<evidence type="ECO:0000255" key="2">
    <source>
        <dbReference type="PROSITE-ProRule" id="PRU00302"/>
    </source>
</evidence>
<evidence type="ECO:0000269" key="3">
    <source>
    </source>
</evidence>
<evidence type="ECO:0000269" key="4">
    <source>
    </source>
</evidence>
<evidence type="ECO:0000269" key="5">
    <source>
    </source>
</evidence>
<evidence type="ECO:0000269" key="6">
    <source>
    </source>
</evidence>
<evidence type="ECO:0000269" key="7">
    <source>
    </source>
</evidence>
<evidence type="ECO:0000269" key="8">
    <source>
    </source>
</evidence>
<evidence type="ECO:0000269" key="9">
    <source>
    </source>
</evidence>
<evidence type="ECO:0000269" key="10">
    <source>
    </source>
</evidence>
<evidence type="ECO:0000303" key="11">
    <source>
    </source>
</evidence>
<evidence type="ECO:0000305" key="12"/>
<evidence type="ECO:0007829" key="13">
    <source>
        <dbReference type="PDB" id="3ZD2"/>
    </source>
</evidence>
<evidence type="ECO:0007829" key="14">
    <source>
        <dbReference type="PDB" id="4MUC"/>
    </source>
</evidence>
<protein>
    <recommendedName>
        <fullName>Complement factor H-related protein 1</fullName>
        <shortName>FHR-1</shortName>
    </recommendedName>
    <alternativeName>
        <fullName>H factor-like protein 1</fullName>
        <shortName evidence="11">FHL-1</shortName>
        <shortName>H-factor-like 1</shortName>
    </alternativeName>
    <alternativeName>
        <fullName>H36</fullName>
    </alternativeName>
</protein>
<keyword id="KW-0002">3D-structure</keyword>
<keyword id="KW-1015">Disulfide bond</keyword>
<keyword id="KW-0325">Glycoprotein</keyword>
<keyword id="KW-1068">Hemolytic uremic syndrome</keyword>
<keyword id="KW-1267">Proteomics identification</keyword>
<keyword id="KW-1185">Reference proteome</keyword>
<keyword id="KW-0677">Repeat</keyword>
<keyword id="KW-0964">Secreted</keyword>
<keyword id="KW-0732">Signal</keyword>
<keyword id="KW-0768">Sushi</keyword>
<organism>
    <name type="scientific">Homo sapiens</name>
    <name type="common">Human</name>
    <dbReference type="NCBI Taxonomy" id="9606"/>
    <lineage>
        <taxon>Eukaryota</taxon>
        <taxon>Metazoa</taxon>
        <taxon>Chordata</taxon>
        <taxon>Craniata</taxon>
        <taxon>Vertebrata</taxon>
        <taxon>Euteleostomi</taxon>
        <taxon>Mammalia</taxon>
        <taxon>Eutheria</taxon>
        <taxon>Euarchontoglires</taxon>
        <taxon>Primates</taxon>
        <taxon>Haplorrhini</taxon>
        <taxon>Catarrhini</taxon>
        <taxon>Hominidae</taxon>
        <taxon>Homo</taxon>
    </lineage>
</organism>
<comment type="function">
    <text evidence="10">Involved in complement regulation. The dimerized forms have avidity for tissue-bound complement fragments and efficiently compete with the physiological complement inhibitor CFH. Can associate with lipoproteins and may play a role in lipid metabolism.</text>
</comment>
<comment type="subunit">
    <text evidence="10">Head-to-tail homodimer and heterodimer with CFHR2 or CFHR5.</text>
</comment>
<comment type="subunit">
    <text evidence="9">(Microbial infection) Interacts with C.albicans GPD2; the interaction is direct and leads to the degradation of C3.</text>
</comment>
<comment type="interaction">
    <interactant intactId="EBI-3935840">
        <id>Q03591</id>
    </interactant>
    <interactant intactId="EBI-11277970">
        <id>Q9UHX3</id>
        <label>ADGRE2</label>
    </interactant>
    <organismsDiffer>false</organismsDiffer>
    <experiments>5</experiments>
</comment>
<comment type="interaction">
    <interactant intactId="EBI-3935840">
        <id>Q03591</id>
    </interactant>
    <interactant intactId="EBI-8558308">
        <id>P01031</id>
        <label>C5</label>
    </interactant>
    <organismsDiffer>false</organismsDiffer>
    <experiments>3</experiments>
</comment>
<comment type="interaction">
    <interactant intactId="EBI-3935840">
        <id>Q03591</id>
    </interactant>
    <interactant intactId="EBI-3935840">
        <id>Q03591</id>
        <label>CFHR1</label>
    </interactant>
    <organismsDiffer>false</organismsDiffer>
    <experiments>6</experiments>
</comment>
<comment type="interaction">
    <interactant intactId="EBI-3935840">
        <id>Q03591</id>
    </interactant>
    <interactant intactId="EBI-21976709">
        <id>P36980</id>
        <label>CFHR2</label>
    </interactant>
    <organismsDiffer>false</organismsDiffer>
    <experiments>5</experiments>
</comment>
<comment type="interaction">
    <interactant intactId="EBI-3935840">
        <id>Q03591</id>
    </interactant>
    <interactant intactId="EBI-11579371">
        <id>Q9BXR6</id>
        <label>CFHR5</label>
    </interactant>
    <organismsDiffer>false</organismsDiffer>
    <experiments>3</experiments>
</comment>
<comment type="interaction">
    <interactant intactId="EBI-3935840">
        <id>Q03591</id>
    </interactant>
    <interactant intactId="EBI-1395983">
        <id>P02741</id>
        <label>CRP</label>
    </interactant>
    <organismsDiffer>false</organismsDiffer>
    <experiments>10</experiments>
</comment>
<comment type="interaction">
    <interactant intactId="EBI-3935840">
        <id>Q03591</id>
    </interactant>
    <interactant intactId="EBI-22114950">
        <id>PRO_0000023545</id>
        <label>PTX3</label>
        <dbReference type="UniProtKB" id="P26022"/>
    </interactant>
    <organismsDiffer>false</organismsDiffer>
    <experiments>5</experiments>
</comment>
<comment type="interaction">
    <interactant intactId="EBI-22118464">
        <id>PRO_0000005896</id>
    </interactant>
    <interactant intactId="EBI-905851">
        <id>P01024</id>
        <label>C3</label>
    </interactant>
    <organismsDiffer>false</organismsDiffer>
    <experiments>2</experiments>
</comment>
<comment type="subcellular location">
    <subcellularLocation>
        <location>Secreted</location>
    </subcellularLocation>
</comment>
<comment type="tissue specificity">
    <text>Expressed by the liver and secreted in plasma.</text>
</comment>
<comment type="PTM">
    <text evidence="4">N-glycosylated. Two forms are observed; one with a single side chain and the other with two.</text>
</comment>
<comment type="disease" evidence="6">
    <disease id="DI-01704">
        <name>Hemolytic uremic syndrome, atypical, 1</name>
        <acronym>AHUS1</acronym>
        <description>An atypical form of hemolytic uremic syndrome. It is a complex genetic disease characterized by microangiopathic hemolytic anemia, thrombocytopenia, renal failure and absence of episodes of enterocolitis and diarrhea. In contrast to typical hemolytic uremic syndrome, atypical forms have a poorer prognosis, with higher death rates and frequent progression to end-stage renal disease.</description>
        <dbReference type="MIM" id="235400"/>
    </disease>
    <text evidence="6 7">Disease susceptibility is associated with variants affecting the gene represented in this entry. A deletion encompassing CFHR1 and CFHR3 is associated with an increased risk of atypical hemolytic uremic syndrome, likely due to a defective regulation of complement activation (PubMed:17367211). Some patients carrying the deletion have serum anti-CFH autoantibodies (PubMed:18006700).</text>
</comment>